<organism>
    <name type="scientific">Limosilactobacillus reuteri (strain DSM 20016)</name>
    <name type="common">Lactobacillus reuteri</name>
    <dbReference type="NCBI Taxonomy" id="557436"/>
    <lineage>
        <taxon>Bacteria</taxon>
        <taxon>Bacillati</taxon>
        <taxon>Bacillota</taxon>
        <taxon>Bacilli</taxon>
        <taxon>Lactobacillales</taxon>
        <taxon>Lactobacillaceae</taxon>
        <taxon>Limosilactobacillus</taxon>
    </lineage>
</organism>
<dbReference type="EMBL" id="CP000705">
    <property type="protein sequence ID" value="ABQ82740.1"/>
    <property type="molecule type" value="Genomic_DNA"/>
</dbReference>
<dbReference type="STRING" id="557436.Lreu_0472"/>
<dbReference type="KEGG" id="lre:Lreu_0472"/>
<dbReference type="eggNOG" id="COG0759">
    <property type="taxonomic scope" value="Bacteria"/>
</dbReference>
<dbReference type="HOGENOM" id="CLU_144811_6_0_9"/>
<dbReference type="Proteomes" id="UP000001991">
    <property type="component" value="Chromosome"/>
</dbReference>
<dbReference type="GO" id="GO:0005886">
    <property type="term" value="C:plasma membrane"/>
    <property type="evidence" value="ECO:0007669"/>
    <property type="project" value="UniProtKB-SubCell"/>
</dbReference>
<dbReference type="HAMAP" id="MF_00386">
    <property type="entry name" value="UPF0161_YidD"/>
    <property type="match status" value="1"/>
</dbReference>
<dbReference type="InterPro" id="IPR002696">
    <property type="entry name" value="Membr_insert_effic_factor_YidD"/>
</dbReference>
<dbReference type="NCBIfam" id="TIGR00278">
    <property type="entry name" value="membrane protein insertion efficiency factor YidD"/>
    <property type="match status" value="1"/>
</dbReference>
<dbReference type="PANTHER" id="PTHR33383">
    <property type="entry name" value="MEMBRANE PROTEIN INSERTION EFFICIENCY FACTOR-RELATED"/>
    <property type="match status" value="1"/>
</dbReference>
<dbReference type="PANTHER" id="PTHR33383:SF1">
    <property type="entry name" value="MEMBRANE PROTEIN INSERTION EFFICIENCY FACTOR-RELATED"/>
    <property type="match status" value="1"/>
</dbReference>
<dbReference type="Pfam" id="PF01809">
    <property type="entry name" value="YidD"/>
    <property type="match status" value="1"/>
</dbReference>
<dbReference type="SMART" id="SM01234">
    <property type="entry name" value="Haemolytic"/>
    <property type="match status" value="1"/>
</dbReference>
<evidence type="ECO:0000255" key="1">
    <source>
        <dbReference type="HAMAP-Rule" id="MF_00386"/>
    </source>
</evidence>
<comment type="function">
    <text evidence="1">Could be involved in insertion of integral membrane proteins into the membrane.</text>
</comment>
<comment type="subcellular location">
    <subcellularLocation>
        <location evidence="1">Cell membrane</location>
        <topology evidence="1">Peripheral membrane protein</topology>
        <orientation evidence="1">Cytoplasmic side</orientation>
    </subcellularLocation>
</comment>
<comment type="similarity">
    <text evidence="1">Belongs to the UPF0161 family.</text>
</comment>
<reference key="1">
    <citation type="journal article" date="2011" name="PLoS Genet.">
        <title>The evolution of host specialization in the vertebrate gut symbiont Lactobacillus reuteri.</title>
        <authorList>
            <person name="Frese S.A."/>
            <person name="Benson A.K."/>
            <person name="Tannock G.W."/>
            <person name="Loach D.M."/>
            <person name="Kim J."/>
            <person name="Zhang M."/>
            <person name="Oh P.L."/>
            <person name="Heng N.C."/>
            <person name="Patil P.B."/>
            <person name="Juge N."/>
            <person name="Mackenzie D.A."/>
            <person name="Pearson B.M."/>
            <person name="Lapidus A."/>
            <person name="Dalin E."/>
            <person name="Tice H."/>
            <person name="Goltsman E."/>
            <person name="Land M."/>
            <person name="Hauser L."/>
            <person name="Ivanova N."/>
            <person name="Kyrpides N.C."/>
            <person name="Walter J."/>
        </authorList>
    </citation>
    <scope>NUCLEOTIDE SEQUENCE [LARGE SCALE GENOMIC DNA]</scope>
    <source>
        <strain>DSM 20016</strain>
    </source>
</reference>
<sequence length="78" mass="9225">MVRILCDLIRWYQQGISAQRPFRVCRFTPSCSQYMLEALQRFGLKGILLGSWRLLRCQPFSRGGYDPVPNHFTFRRQG</sequence>
<feature type="chain" id="PRO_1000060725" description="Putative membrane protein insertion efficiency factor">
    <location>
        <begin position="1"/>
        <end position="78"/>
    </location>
</feature>
<proteinExistence type="inferred from homology"/>
<keyword id="KW-1003">Cell membrane</keyword>
<keyword id="KW-0472">Membrane</keyword>
<keyword id="KW-1185">Reference proteome</keyword>
<accession>A5VIR6</accession>
<gene>
    <name type="ordered locus">Lreu_0472</name>
</gene>
<name>YIDD_LIMRD</name>
<protein>
    <recommendedName>
        <fullName evidence="1">Putative membrane protein insertion efficiency factor</fullName>
    </recommendedName>
</protein>